<organism>
    <name type="scientific">Bos taurus</name>
    <name type="common">Bovine</name>
    <dbReference type="NCBI Taxonomy" id="9913"/>
    <lineage>
        <taxon>Eukaryota</taxon>
        <taxon>Metazoa</taxon>
        <taxon>Chordata</taxon>
        <taxon>Craniata</taxon>
        <taxon>Vertebrata</taxon>
        <taxon>Euteleostomi</taxon>
        <taxon>Mammalia</taxon>
        <taxon>Eutheria</taxon>
        <taxon>Laurasiatheria</taxon>
        <taxon>Artiodactyla</taxon>
        <taxon>Ruminantia</taxon>
        <taxon>Pecora</taxon>
        <taxon>Bovidae</taxon>
        <taxon>Bovinae</taxon>
        <taxon>Bos</taxon>
    </lineage>
</organism>
<sequence length="376" mass="41877">MCEEETTALVCDNGSGLCKAGFAGDDAPRAVFPSIVGRPRHQGVMVGMGQKDSYVGDEAQSKRGILTLKYPIEHGIITNWDDMEKIWHHSFYNELRVAPEEHPTLLTEAPLNPKANREKMTQIMFETFNVPAMYVAIQAVLSLYASGRTTGIVLDSGDGVTHNVPIYEGYALPHAIMRLDLAGRDLTDYLMKILTERGYSFVTTAEREIVRDIKEKLCYVALDFENEMATAASSSSLEKSYELPDGQVITIGNERFRCPETLFQPSFIGMESAGIHETTYNSIMKCDIDIRKDLYANNVLSGGTTMYPGIADRMQKEITALAPSTMKIKIIAPPERKYSVWIGGSILASLSTFQQMWISKPEYDEAGPSIVHRKCF</sequence>
<name>ACTH_BOVIN</name>
<keyword id="KW-0007">Acetylation</keyword>
<keyword id="KW-0067">ATP-binding</keyword>
<keyword id="KW-0963">Cytoplasm</keyword>
<keyword id="KW-0206">Cytoskeleton</keyword>
<keyword id="KW-0378">Hydrolase</keyword>
<keyword id="KW-0488">Methylation</keyword>
<keyword id="KW-0514">Muscle protein</keyword>
<keyword id="KW-0547">Nucleotide-binding</keyword>
<keyword id="KW-0558">Oxidation</keyword>
<keyword id="KW-1185">Reference proteome</keyword>
<evidence type="ECO:0000250" key="1"/>
<evidence type="ECO:0000250" key="2">
    <source>
        <dbReference type="UniProtKB" id="P62737"/>
    </source>
</evidence>
<evidence type="ECO:0000250" key="3">
    <source>
        <dbReference type="UniProtKB" id="P63267"/>
    </source>
</evidence>
<evidence type="ECO:0000250" key="4">
    <source>
        <dbReference type="UniProtKB" id="P63268"/>
    </source>
</evidence>
<evidence type="ECO:0000250" key="5">
    <source>
        <dbReference type="UniProtKB" id="P68133"/>
    </source>
</evidence>
<evidence type="ECO:0000250" key="6">
    <source>
        <dbReference type="UniProtKB" id="P68137"/>
    </source>
</evidence>
<evidence type="ECO:0000305" key="7"/>
<dbReference type="EC" id="3.6.4.-" evidence="6"/>
<dbReference type="EMBL" id="BT021005">
    <property type="protein sequence ID" value="AAX09022.1"/>
    <property type="molecule type" value="mRNA"/>
</dbReference>
<dbReference type="EMBL" id="BC104579">
    <property type="protein sequence ID" value="AAI04580.1"/>
    <property type="molecule type" value="mRNA"/>
</dbReference>
<dbReference type="RefSeq" id="NP_001013610.1">
    <property type="nucleotide sequence ID" value="NM_001013592.1"/>
</dbReference>
<dbReference type="SMR" id="Q5E9B5"/>
<dbReference type="FunCoup" id="Q5E9B5">
    <property type="interactions" value="381"/>
</dbReference>
<dbReference type="STRING" id="9913.ENSBTAP00000020520"/>
<dbReference type="PeptideAtlas" id="Q5E9B5"/>
<dbReference type="Ensembl" id="ENSBTAT00000020520.7">
    <property type="protein sequence ID" value="ENSBTAP00000020520.6"/>
    <property type="gene ID" value="ENSBTAG00000015441.7"/>
</dbReference>
<dbReference type="GeneID" id="281595"/>
<dbReference type="KEGG" id="bta:281595"/>
<dbReference type="CTD" id="72"/>
<dbReference type="VEuPathDB" id="HostDB:ENSBTAG00000015441"/>
<dbReference type="VGNC" id="VGNC:59201">
    <property type="gene designation" value="ACTG2"/>
</dbReference>
<dbReference type="GeneTree" id="ENSGT00940000154148"/>
<dbReference type="InParanoid" id="Q5E9B5"/>
<dbReference type="OMA" id="PXEREIV"/>
<dbReference type="OrthoDB" id="9971293at2759"/>
<dbReference type="Reactome" id="R-BTA-445355">
    <property type="pathway name" value="Smooth Muscle Contraction"/>
</dbReference>
<dbReference type="Reactome" id="R-BTA-9913351">
    <property type="pathway name" value="Formation of the dystrophin-glycoprotein complex (DGC)"/>
</dbReference>
<dbReference type="Proteomes" id="UP000009136">
    <property type="component" value="Chromosome 11"/>
</dbReference>
<dbReference type="GO" id="GO:0015629">
    <property type="term" value="C:actin cytoskeleton"/>
    <property type="evidence" value="ECO:0000318"/>
    <property type="project" value="GO_Central"/>
</dbReference>
<dbReference type="GO" id="GO:0044297">
    <property type="term" value="C:cell body"/>
    <property type="evidence" value="ECO:0000250"/>
    <property type="project" value="AgBase"/>
</dbReference>
<dbReference type="GO" id="GO:0071944">
    <property type="term" value="C:cell periphery"/>
    <property type="evidence" value="ECO:0007669"/>
    <property type="project" value="Ensembl"/>
</dbReference>
<dbReference type="GO" id="GO:0005737">
    <property type="term" value="C:cytoplasm"/>
    <property type="evidence" value="ECO:0000250"/>
    <property type="project" value="AgBase"/>
</dbReference>
<dbReference type="GO" id="GO:0030175">
    <property type="term" value="C:filopodium"/>
    <property type="evidence" value="ECO:0000250"/>
    <property type="project" value="AgBase"/>
</dbReference>
<dbReference type="GO" id="GO:0030027">
    <property type="term" value="C:lamellipodium"/>
    <property type="evidence" value="ECO:0000250"/>
    <property type="project" value="AgBase"/>
</dbReference>
<dbReference type="GO" id="GO:0032982">
    <property type="term" value="C:myosin filament"/>
    <property type="evidence" value="ECO:0000250"/>
    <property type="project" value="AgBase"/>
</dbReference>
<dbReference type="GO" id="GO:0005524">
    <property type="term" value="F:ATP binding"/>
    <property type="evidence" value="ECO:0007669"/>
    <property type="project" value="UniProtKB-KW"/>
</dbReference>
<dbReference type="GO" id="GO:0016787">
    <property type="term" value="F:hydrolase activity"/>
    <property type="evidence" value="ECO:0007669"/>
    <property type="project" value="UniProtKB-KW"/>
</dbReference>
<dbReference type="GO" id="GO:0090131">
    <property type="term" value="P:mesenchyme migration"/>
    <property type="evidence" value="ECO:0000250"/>
    <property type="project" value="AgBase"/>
</dbReference>
<dbReference type="GO" id="GO:0010628">
    <property type="term" value="P:positive regulation of gene expression"/>
    <property type="evidence" value="ECO:0000250"/>
    <property type="project" value="AgBase"/>
</dbReference>
<dbReference type="CDD" id="cd10224">
    <property type="entry name" value="ASKHA_NBD_actin"/>
    <property type="match status" value="1"/>
</dbReference>
<dbReference type="FunFam" id="2.30.36.70:FF:000001">
    <property type="entry name" value="Actin, alpha skeletal muscle"/>
    <property type="match status" value="1"/>
</dbReference>
<dbReference type="FunFam" id="3.30.420.40:FF:000131">
    <property type="entry name" value="Actin, alpha skeletal muscle"/>
    <property type="match status" value="1"/>
</dbReference>
<dbReference type="FunFam" id="3.30.420.40:FF:000291">
    <property type="entry name" value="Actin, alpha skeletal muscle"/>
    <property type="match status" value="1"/>
</dbReference>
<dbReference type="FunFam" id="3.90.640.10:FF:000047">
    <property type="entry name" value="Actin, alpha skeletal muscle"/>
    <property type="match status" value="1"/>
</dbReference>
<dbReference type="FunFam" id="3.30.420.40:FF:000058">
    <property type="entry name" value="Putative actin-related protein 5"/>
    <property type="match status" value="1"/>
</dbReference>
<dbReference type="Gene3D" id="3.30.420.40">
    <property type="match status" value="2"/>
</dbReference>
<dbReference type="Gene3D" id="3.90.640.10">
    <property type="entry name" value="Actin, Chain A, domain 4"/>
    <property type="match status" value="1"/>
</dbReference>
<dbReference type="InterPro" id="IPR004000">
    <property type="entry name" value="Actin"/>
</dbReference>
<dbReference type="InterPro" id="IPR020902">
    <property type="entry name" value="Actin/actin-like_CS"/>
</dbReference>
<dbReference type="InterPro" id="IPR004001">
    <property type="entry name" value="Actin_CS"/>
</dbReference>
<dbReference type="InterPro" id="IPR043129">
    <property type="entry name" value="ATPase_NBD"/>
</dbReference>
<dbReference type="PANTHER" id="PTHR11937">
    <property type="entry name" value="ACTIN"/>
    <property type="match status" value="1"/>
</dbReference>
<dbReference type="Pfam" id="PF00022">
    <property type="entry name" value="Actin"/>
    <property type="match status" value="1"/>
</dbReference>
<dbReference type="PRINTS" id="PR00190">
    <property type="entry name" value="ACTIN"/>
</dbReference>
<dbReference type="SMART" id="SM00268">
    <property type="entry name" value="ACTIN"/>
    <property type="match status" value="1"/>
</dbReference>
<dbReference type="SUPFAM" id="SSF53067">
    <property type="entry name" value="Actin-like ATPase domain"/>
    <property type="match status" value="2"/>
</dbReference>
<dbReference type="PROSITE" id="PS00406">
    <property type="entry name" value="ACTINS_1"/>
    <property type="match status" value="1"/>
</dbReference>
<dbReference type="PROSITE" id="PS00432">
    <property type="entry name" value="ACTINS_2"/>
    <property type="match status" value="1"/>
</dbReference>
<dbReference type="PROSITE" id="PS01132">
    <property type="entry name" value="ACTINS_ACT_LIKE"/>
    <property type="match status" value="1"/>
</dbReference>
<gene>
    <name type="primary">ACTG2</name>
</gene>
<reference key="1">
    <citation type="journal article" date="2005" name="BMC Genomics">
        <title>Characterization of 954 bovine full-CDS cDNA sequences.</title>
        <authorList>
            <person name="Harhay G.P."/>
            <person name="Sonstegard T.S."/>
            <person name="Keele J.W."/>
            <person name="Heaton M.P."/>
            <person name="Clawson M.L."/>
            <person name="Snelling W.M."/>
            <person name="Wiedmann R.T."/>
            <person name="Van Tassell C.P."/>
            <person name="Smith T.P.L."/>
        </authorList>
    </citation>
    <scope>NUCLEOTIDE SEQUENCE [LARGE SCALE MRNA]</scope>
</reference>
<reference key="2">
    <citation type="submission" date="2005-09" db="EMBL/GenBank/DDBJ databases">
        <authorList>
            <consortium name="NIH - Mammalian Gene Collection (MGC) project"/>
        </authorList>
    </citation>
    <scope>NUCLEOTIDE SEQUENCE [LARGE SCALE MRNA]</scope>
    <source>
        <strain>Hereford</strain>
        <tissue>Ascending colon</tissue>
    </source>
</reference>
<feature type="initiator methionine" description="Removed">
    <location>
        <position position="1"/>
    </location>
</feature>
<feature type="chain" id="PRO_0000442947" description="Actin, gamma-enteric smooth muscle, intermediate form" evidence="2">
    <location>
        <begin position="2"/>
        <end position="376"/>
    </location>
</feature>
<feature type="chain" id="PRO_0000442948" description="Actin, gamma-enteric smooth muscle" evidence="3">
    <location>
        <begin position="3"/>
        <end position="376"/>
    </location>
</feature>
<feature type="modified residue" description="N-acetylcysteine; in intermediate form" evidence="2">
    <location>
        <position position="2"/>
    </location>
</feature>
<feature type="modified residue" description="Methionine (R)-sulfoxide" evidence="4">
    <location>
        <position position="45"/>
    </location>
</feature>
<feature type="modified residue" description="Methionine (R)-sulfoxide" evidence="4">
    <location>
        <position position="48"/>
    </location>
</feature>
<feature type="modified residue" description="Tele-methylhistidine" evidence="3">
    <location>
        <position position="74"/>
    </location>
</feature>
<proteinExistence type="evidence at transcript level"/>
<accession>Q5E9B5</accession>
<comment type="function">
    <text evidence="1">Actins are highly conserved proteins that are involved in various types of cell motility and are ubiquitously expressed in all eukaryotic cells.</text>
</comment>
<comment type="catalytic activity">
    <reaction evidence="6">
        <text>ATP + H2O = ADP + phosphate + H(+)</text>
        <dbReference type="Rhea" id="RHEA:13065"/>
        <dbReference type="ChEBI" id="CHEBI:15377"/>
        <dbReference type="ChEBI" id="CHEBI:15378"/>
        <dbReference type="ChEBI" id="CHEBI:30616"/>
        <dbReference type="ChEBI" id="CHEBI:43474"/>
        <dbReference type="ChEBI" id="CHEBI:456216"/>
    </reaction>
</comment>
<comment type="subunit">
    <text evidence="1">Polymerization of globular actin (G-actin) leads to a structural filament (F-actin) in the form of a two-stranded helix. Each actin can bind to 4 others (By similarity).</text>
</comment>
<comment type="subcellular location">
    <subcellularLocation>
        <location evidence="1">Cytoplasm</location>
        <location evidence="1">Cytoskeleton</location>
    </subcellularLocation>
</comment>
<comment type="PTM">
    <molecule>Actin, gamma-enteric smooth muscle, intermediate form</molecule>
    <text evidence="2">N-terminal cleavage of acetylated cysteine of intermediate muscle actin by ACTMAP.</text>
</comment>
<comment type="PTM">
    <text evidence="4">Oxidation of Met-45 and Met-48 by MICALs (MICAL1, MICAL2 or MICAL3) to form methionine sulfoxide promotes actin filament depolymerization. MICAL1 and MICAL2 produce the (R)-S-oxide form. The (R)-S-oxide form is reverted by MSRB1 and MSRB2, which promotes actin repolymerization.</text>
</comment>
<comment type="PTM">
    <text evidence="5">Monomethylation at Lys-85 (K85me1) regulates actin-myosin interaction and actomyosin-dependent processes. Demethylation by ALKBH4 is required for maintaining actomyosin dynamics supporting normal cleavage furrow ingression during cytokinesis and cell migration.</text>
</comment>
<comment type="PTM">
    <text evidence="3">Methylated at His-74 by SETD3.</text>
</comment>
<comment type="miscellaneous">
    <text>In vertebrates 3 main groups of actin isoforms, alpha, beta and gamma have been identified. The alpha actins are found in muscle tissues and are a major constituent of the contractile apparatus. The beta and gamma actins coexist in most cell types as components of the cytoskeleton and as mediators of internal cell motility.</text>
</comment>
<comment type="similarity">
    <text evidence="7">Belongs to the actin family.</text>
</comment>
<protein>
    <recommendedName>
        <fullName>Actin, gamma-enteric smooth muscle</fullName>
        <ecNumber evidence="6">3.6.4.-</ecNumber>
    </recommendedName>
    <alternativeName>
        <fullName>Gamma-2-actin</fullName>
    </alternativeName>
    <alternativeName>
        <fullName>Smooth muscle gamma-actin</fullName>
    </alternativeName>
    <component>
        <recommendedName>
            <fullName>Actin, gamma-enteric smooth muscle, intermediate form</fullName>
        </recommendedName>
    </component>
</protein>